<comment type="function">
    <text evidence="1">Involved in the biosynthesis of ADP-glucose, a building block required for the elongation reactions to produce glycogen. Catalyzes the reaction between ATP and alpha-D-glucose 1-phosphate (G1P) to produce pyrophosphate and ADP-Glc.</text>
</comment>
<comment type="catalytic activity">
    <reaction evidence="1">
        <text>alpha-D-glucose 1-phosphate + ATP + H(+) = ADP-alpha-D-glucose + diphosphate</text>
        <dbReference type="Rhea" id="RHEA:12120"/>
        <dbReference type="ChEBI" id="CHEBI:15378"/>
        <dbReference type="ChEBI" id="CHEBI:30616"/>
        <dbReference type="ChEBI" id="CHEBI:33019"/>
        <dbReference type="ChEBI" id="CHEBI:57498"/>
        <dbReference type="ChEBI" id="CHEBI:58601"/>
        <dbReference type="EC" id="2.7.7.27"/>
    </reaction>
</comment>
<comment type="pathway">
    <text evidence="1">Glycan biosynthesis; glycogen biosynthesis.</text>
</comment>
<comment type="subunit">
    <text evidence="1">Homotetramer.</text>
</comment>
<comment type="similarity">
    <text evidence="1">Belongs to the bacterial/plant glucose-1-phosphate adenylyltransferase family.</text>
</comment>
<accession>Q9ZFN4</accession>
<feature type="chain" id="PRO_0000195322" description="Glucose-1-phosphate adenylyltransferase">
    <location>
        <begin position="1"/>
        <end position="423"/>
    </location>
</feature>
<feature type="binding site" evidence="1">
    <location>
        <position position="112"/>
    </location>
    <ligand>
        <name>alpha-D-glucose 1-phosphate</name>
        <dbReference type="ChEBI" id="CHEBI:58601"/>
    </ligand>
</feature>
<feature type="binding site" evidence="1">
    <location>
        <position position="177"/>
    </location>
    <ligand>
        <name>alpha-D-glucose 1-phosphate</name>
        <dbReference type="ChEBI" id="CHEBI:58601"/>
    </ligand>
</feature>
<feature type="binding site" evidence="1">
    <location>
        <begin position="192"/>
        <end position="193"/>
    </location>
    <ligand>
        <name>alpha-D-glucose 1-phosphate</name>
        <dbReference type="ChEBI" id="CHEBI:58601"/>
    </ligand>
</feature>
<feature type="binding site" evidence="1">
    <location>
        <position position="210"/>
    </location>
    <ligand>
        <name>alpha-D-glucose 1-phosphate</name>
        <dbReference type="ChEBI" id="CHEBI:58601"/>
    </ligand>
</feature>
<name>GLGC_RHORU</name>
<evidence type="ECO:0000255" key="1">
    <source>
        <dbReference type="HAMAP-Rule" id="MF_00624"/>
    </source>
</evidence>
<reference key="1">
    <citation type="journal article" date="2000" name="Arch. Biochem. Biophys.">
        <title>Cloning and sequencing of glycogen metabolism genes from Rhodobacter sphaeroides 2.4.1. Expression and characterization of recombinant ADP-glucose pyrophosphorylase.</title>
        <authorList>
            <person name="Igarashi R.Y."/>
            <person name="Meyer C.R."/>
        </authorList>
    </citation>
    <scope>NUCLEOTIDE SEQUENCE [GENOMIC DNA]</scope>
    <source>
        <strain>UR1</strain>
    </source>
</reference>
<sequence>MDQITEFQLDINRALKETLALVLAGGRGSRLRDLTNRESKPAVPFGGKYRIIDFPLSNCMNSGIRRMCVITQYRAHTLIHHIQRGWGFLRAEIGEFVELWPAQQQTDKESWYLGTADAVHQNLDLIRMHDPRFVLILAGDHIYKQDYSKLLAHHIARGSDCTVACVDVPREEATGYGCVEVDNDDNIVHFLEKPANPPGIPGRPDRAFASMGIYIFNADFLYEILESDALNEASQHDFGRDIIPSQVGKARIVAHRFSQSCVYSVGRREPYWRDVGTVDAYWSANIDLVSVTPALDLYDADWPIWTYQMQRPPAKFVFDTDERRGMAKDSLVSAGCIVSGGAVTGSLLFNDVRVNSYSSVIDTVILPMGDIGRHARLTKCILDTGCRIPEGLVIGEDPILDAKRFHVTEQGITLVTPDRLALL</sequence>
<keyword id="KW-0067">ATP-binding</keyword>
<keyword id="KW-0119">Carbohydrate metabolism</keyword>
<keyword id="KW-0320">Glycogen biosynthesis</keyword>
<keyword id="KW-0321">Glycogen metabolism</keyword>
<keyword id="KW-0547">Nucleotide-binding</keyword>
<keyword id="KW-0548">Nucleotidyltransferase</keyword>
<keyword id="KW-0808">Transferase</keyword>
<organism>
    <name type="scientific">Rhodospirillum rubrum</name>
    <dbReference type="NCBI Taxonomy" id="1085"/>
    <lineage>
        <taxon>Bacteria</taxon>
        <taxon>Pseudomonadati</taxon>
        <taxon>Pseudomonadota</taxon>
        <taxon>Alphaproteobacteria</taxon>
        <taxon>Rhodospirillales</taxon>
        <taxon>Rhodospirillaceae</taxon>
        <taxon>Rhodospirillum</taxon>
    </lineage>
</organism>
<protein>
    <recommendedName>
        <fullName evidence="1">Glucose-1-phosphate adenylyltransferase</fullName>
        <ecNumber evidence="1">2.7.7.27</ecNumber>
    </recommendedName>
    <alternativeName>
        <fullName evidence="1">ADP-glucose pyrophosphorylase</fullName>
        <shortName evidence="1">ADPGlc PPase</shortName>
    </alternativeName>
    <alternativeName>
        <fullName evidence="1">ADP-glucose synthase</fullName>
    </alternativeName>
</protein>
<proteinExistence type="inferred from homology"/>
<dbReference type="EC" id="2.7.7.27" evidence="1"/>
<dbReference type="EMBL" id="AF097739">
    <property type="protein sequence ID" value="AAC71050.2"/>
    <property type="molecule type" value="Genomic_DNA"/>
</dbReference>
<dbReference type="RefSeq" id="WP_011389901.1">
    <property type="nucleotide sequence ID" value="NZ_DAMDTZ010000028.1"/>
</dbReference>
<dbReference type="SMR" id="Q9ZFN4"/>
<dbReference type="OMA" id="YPLTKMR"/>
<dbReference type="UniPathway" id="UPA00164"/>
<dbReference type="GO" id="GO:0005524">
    <property type="term" value="F:ATP binding"/>
    <property type="evidence" value="ECO:0007669"/>
    <property type="project" value="UniProtKB-KW"/>
</dbReference>
<dbReference type="GO" id="GO:0008878">
    <property type="term" value="F:glucose-1-phosphate adenylyltransferase activity"/>
    <property type="evidence" value="ECO:0007669"/>
    <property type="project" value="UniProtKB-UniRule"/>
</dbReference>
<dbReference type="GO" id="GO:0005978">
    <property type="term" value="P:glycogen biosynthetic process"/>
    <property type="evidence" value="ECO:0007669"/>
    <property type="project" value="UniProtKB-UniRule"/>
</dbReference>
<dbReference type="CDD" id="cd02508">
    <property type="entry name" value="ADP_Glucose_PP"/>
    <property type="match status" value="1"/>
</dbReference>
<dbReference type="CDD" id="cd04651">
    <property type="entry name" value="LbH_G1P_AT_C"/>
    <property type="match status" value="1"/>
</dbReference>
<dbReference type="Gene3D" id="2.160.10.10">
    <property type="entry name" value="Hexapeptide repeat proteins"/>
    <property type="match status" value="1"/>
</dbReference>
<dbReference type="Gene3D" id="3.90.550.10">
    <property type="entry name" value="Spore Coat Polysaccharide Biosynthesis Protein SpsA, Chain A"/>
    <property type="match status" value="1"/>
</dbReference>
<dbReference type="HAMAP" id="MF_00624">
    <property type="entry name" value="GlgC"/>
    <property type="match status" value="1"/>
</dbReference>
<dbReference type="InterPro" id="IPR011831">
    <property type="entry name" value="ADP-Glc_PPase"/>
</dbReference>
<dbReference type="InterPro" id="IPR005836">
    <property type="entry name" value="ADP_Glu_pyroP_CS"/>
</dbReference>
<dbReference type="InterPro" id="IPR023049">
    <property type="entry name" value="GlgC_bac"/>
</dbReference>
<dbReference type="InterPro" id="IPR056818">
    <property type="entry name" value="GlmU/GlgC-like_hexapep"/>
</dbReference>
<dbReference type="InterPro" id="IPR005835">
    <property type="entry name" value="NTP_transferase_dom"/>
</dbReference>
<dbReference type="InterPro" id="IPR029044">
    <property type="entry name" value="Nucleotide-diphossugar_trans"/>
</dbReference>
<dbReference type="InterPro" id="IPR011004">
    <property type="entry name" value="Trimer_LpxA-like_sf"/>
</dbReference>
<dbReference type="NCBIfam" id="TIGR02091">
    <property type="entry name" value="glgC"/>
    <property type="match status" value="1"/>
</dbReference>
<dbReference type="NCBIfam" id="NF001947">
    <property type="entry name" value="PRK00725.1"/>
    <property type="match status" value="1"/>
</dbReference>
<dbReference type="NCBIfam" id="NF002023">
    <property type="entry name" value="PRK00844.1"/>
    <property type="match status" value="1"/>
</dbReference>
<dbReference type="PANTHER" id="PTHR43523:SF2">
    <property type="entry name" value="GLUCOSE-1-PHOSPHATE ADENYLYLTRANSFERASE"/>
    <property type="match status" value="1"/>
</dbReference>
<dbReference type="PANTHER" id="PTHR43523">
    <property type="entry name" value="GLUCOSE-1-PHOSPHATE ADENYLYLTRANSFERASE-RELATED"/>
    <property type="match status" value="1"/>
</dbReference>
<dbReference type="Pfam" id="PF24894">
    <property type="entry name" value="Hexapep_GlmU"/>
    <property type="match status" value="1"/>
</dbReference>
<dbReference type="Pfam" id="PF00483">
    <property type="entry name" value="NTP_transferase"/>
    <property type="match status" value="1"/>
</dbReference>
<dbReference type="SUPFAM" id="SSF53448">
    <property type="entry name" value="Nucleotide-diphospho-sugar transferases"/>
    <property type="match status" value="1"/>
</dbReference>
<dbReference type="SUPFAM" id="SSF51161">
    <property type="entry name" value="Trimeric LpxA-like enzymes"/>
    <property type="match status" value="1"/>
</dbReference>
<dbReference type="PROSITE" id="PS00808">
    <property type="entry name" value="ADP_GLC_PYROPHOSPH_1"/>
    <property type="match status" value="1"/>
</dbReference>
<dbReference type="PROSITE" id="PS00809">
    <property type="entry name" value="ADP_GLC_PYROPHOSPH_2"/>
    <property type="match status" value="1"/>
</dbReference>
<dbReference type="PROSITE" id="PS00810">
    <property type="entry name" value="ADP_GLC_PYROPHOSPH_3"/>
    <property type="match status" value="1"/>
</dbReference>
<gene>
    <name evidence="1" type="primary">glgC</name>
</gene>